<name>GLH3_CAEEL</name>
<keyword id="KW-0067">ATP-binding</keyword>
<keyword id="KW-0963">Cytoplasm</keyword>
<keyword id="KW-0347">Helicase</keyword>
<keyword id="KW-0378">Hydrolase</keyword>
<keyword id="KW-0479">Metal-binding</keyword>
<keyword id="KW-0547">Nucleotide-binding</keyword>
<keyword id="KW-1185">Reference proteome</keyword>
<keyword id="KW-0677">Repeat</keyword>
<keyword id="KW-0694">RNA-binding</keyword>
<keyword id="KW-0862">Zinc</keyword>
<keyword id="KW-0863">Zinc-finger</keyword>
<organism>
    <name type="scientific">Caenorhabditis elegans</name>
    <dbReference type="NCBI Taxonomy" id="6239"/>
    <lineage>
        <taxon>Eukaryota</taxon>
        <taxon>Metazoa</taxon>
        <taxon>Ecdysozoa</taxon>
        <taxon>Nematoda</taxon>
        <taxon>Chromadorea</taxon>
        <taxon>Rhabditida</taxon>
        <taxon>Rhabditina</taxon>
        <taxon>Rhabditomorpha</taxon>
        <taxon>Rhabditoidea</taxon>
        <taxon>Rhabditidae</taxon>
        <taxon>Peloderinae</taxon>
        <taxon>Caenorhabditis</taxon>
    </lineage>
</organism>
<protein>
    <recommendedName>
        <fullName>ATP-dependent RNA helicase glh-3</fullName>
        <ecNumber>3.6.4.13</ecNumber>
    </recommendedName>
    <alternativeName>
        <fullName>Germline helicase 3</fullName>
    </alternativeName>
</protein>
<accession>O01836</accession>
<dbReference type="EC" id="3.6.4.13"/>
<dbReference type="EMBL" id="AF079509">
    <property type="protein sequence ID" value="AAC28388.1"/>
    <property type="molecule type" value="mRNA"/>
</dbReference>
<dbReference type="EMBL" id="FO080197">
    <property type="protein sequence ID" value="CCD61900.1"/>
    <property type="molecule type" value="Genomic_DNA"/>
</dbReference>
<dbReference type="PIR" id="T15231">
    <property type="entry name" value="T15231"/>
</dbReference>
<dbReference type="RefSeq" id="NP_491681.1">
    <property type="nucleotide sequence ID" value="NM_059280.5"/>
</dbReference>
<dbReference type="SMR" id="O01836"/>
<dbReference type="BioGRID" id="37700">
    <property type="interactions" value="7"/>
</dbReference>
<dbReference type="FunCoup" id="O01836">
    <property type="interactions" value="4"/>
</dbReference>
<dbReference type="IntAct" id="O01836">
    <property type="interactions" value="4"/>
</dbReference>
<dbReference type="STRING" id="6239.B0414.6.1"/>
<dbReference type="iPTMnet" id="O01836"/>
<dbReference type="PaxDb" id="6239-B0414.6"/>
<dbReference type="PeptideAtlas" id="O01836"/>
<dbReference type="EnsemblMetazoa" id="B0414.6.1">
    <property type="protein sequence ID" value="B0414.6.1"/>
    <property type="gene ID" value="WBGene00001600"/>
</dbReference>
<dbReference type="GeneID" id="172245"/>
<dbReference type="KEGG" id="cel:CELE_B0414.6"/>
<dbReference type="UCSC" id="B0414.6">
    <property type="organism name" value="c. elegans"/>
</dbReference>
<dbReference type="AGR" id="WB:WBGene00001600"/>
<dbReference type="CTD" id="172245"/>
<dbReference type="WormBase" id="B0414.6">
    <property type="protein sequence ID" value="CE07736"/>
    <property type="gene ID" value="WBGene00001600"/>
    <property type="gene designation" value="glh-3"/>
</dbReference>
<dbReference type="eggNOG" id="KOG0335">
    <property type="taxonomic scope" value="Eukaryota"/>
</dbReference>
<dbReference type="GeneTree" id="ENSGT00940000157507"/>
<dbReference type="HOGENOM" id="CLU_003041_16_3_1"/>
<dbReference type="InParanoid" id="O01836"/>
<dbReference type="OrthoDB" id="196131at2759"/>
<dbReference type="PhylomeDB" id="O01836"/>
<dbReference type="SignaLink" id="O01836"/>
<dbReference type="CD-CODE" id="73A75392">
    <property type="entry name" value="P-granule"/>
</dbReference>
<dbReference type="PRO" id="PR:O01836"/>
<dbReference type="Proteomes" id="UP000001940">
    <property type="component" value="Chromosome I"/>
</dbReference>
<dbReference type="Bgee" id="WBGene00001600">
    <property type="expression patterns" value="Expressed in germ line (C elegans) and 3 other cell types or tissues"/>
</dbReference>
<dbReference type="GO" id="GO:0005634">
    <property type="term" value="C:nucleus"/>
    <property type="evidence" value="ECO:0000318"/>
    <property type="project" value="GO_Central"/>
</dbReference>
<dbReference type="GO" id="GO:0043186">
    <property type="term" value="C:P granule"/>
    <property type="evidence" value="ECO:0000314"/>
    <property type="project" value="WormBase"/>
</dbReference>
<dbReference type="GO" id="GO:0005524">
    <property type="term" value="F:ATP binding"/>
    <property type="evidence" value="ECO:0007669"/>
    <property type="project" value="UniProtKB-KW"/>
</dbReference>
<dbReference type="GO" id="GO:0016887">
    <property type="term" value="F:ATP hydrolysis activity"/>
    <property type="evidence" value="ECO:0007669"/>
    <property type="project" value="RHEA"/>
</dbReference>
<dbReference type="GO" id="GO:0017151">
    <property type="term" value="F:DEAD/H-box RNA helicase binding"/>
    <property type="evidence" value="ECO:0000353"/>
    <property type="project" value="WormBase"/>
</dbReference>
<dbReference type="GO" id="GO:0008432">
    <property type="term" value="F:JUN kinase binding"/>
    <property type="evidence" value="ECO:0000353"/>
    <property type="project" value="WormBase"/>
</dbReference>
<dbReference type="GO" id="GO:0003729">
    <property type="term" value="F:mRNA binding"/>
    <property type="evidence" value="ECO:0000318"/>
    <property type="project" value="GO_Central"/>
</dbReference>
<dbReference type="GO" id="GO:0003724">
    <property type="term" value="F:RNA helicase activity"/>
    <property type="evidence" value="ECO:0000318"/>
    <property type="project" value="GO_Central"/>
</dbReference>
<dbReference type="GO" id="GO:0008270">
    <property type="term" value="F:zinc ion binding"/>
    <property type="evidence" value="ECO:0007669"/>
    <property type="project" value="UniProtKB-KW"/>
</dbReference>
<dbReference type="GO" id="GO:0030154">
    <property type="term" value="P:cell differentiation"/>
    <property type="evidence" value="ECO:0000318"/>
    <property type="project" value="GO_Central"/>
</dbReference>
<dbReference type="GO" id="GO:0007276">
    <property type="term" value="P:gamete generation"/>
    <property type="evidence" value="ECO:0000318"/>
    <property type="project" value="GO_Central"/>
</dbReference>
<dbReference type="GO" id="GO:0007281">
    <property type="term" value="P:germ cell development"/>
    <property type="evidence" value="ECO:0000318"/>
    <property type="project" value="GO_Central"/>
</dbReference>
<dbReference type="CDD" id="cd17967">
    <property type="entry name" value="DEADc_DDX3_DDX4"/>
    <property type="match status" value="1"/>
</dbReference>
<dbReference type="CDD" id="cd18787">
    <property type="entry name" value="SF2_C_DEAD"/>
    <property type="match status" value="1"/>
</dbReference>
<dbReference type="FunFam" id="3.40.50.300:FF:000008">
    <property type="entry name" value="ATP-dependent RNA helicase RhlB"/>
    <property type="match status" value="1"/>
</dbReference>
<dbReference type="FunFam" id="3.40.50.300:FF:000657">
    <property type="entry name" value="Probable ATP-dependent RNA helicase DDX41"/>
    <property type="match status" value="1"/>
</dbReference>
<dbReference type="Gene3D" id="3.40.50.300">
    <property type="entry name" value="P-loop containing nucleotide triphosphate hydrolases"/>
    <property type="match status" value="2"/>
</dbReference>
<dbReference type="Gene3D" id="4.10.60.10">
    <property type="entry name" value="Zinc finger, CCHC-type"/>
    <property type="match status" value="1"/>
</dbReference>
<dbReference type="InterPro" id="IPR011545">
    <property type="entry name" value="DEAD/DEAH_box_helicase_dom"/>
</dbReference>
<dbReference type="InterPro" id="IPR044763">
    <property type="entry name" value="Ded1/Dbp1_DEADc"/>
</dbReference>
<dbReference type="InterPro" id="IPR014001">
    <property type="entry name" value="Helicase_ATP-bd"/>
</dbReference>
<dbReference type="InterPro" id="IPR001650">
    <property type="entry name" value="Helicase_C-like"/>
</dbReference>
<dbReference type="InterPro" id="IPR027417">
    <property type="entry name" value="P-loop_NTPase"/>
</dbReference>
<dbReference type="InterPro" id="IPR000629">
    <property type="entry name" value="RNA-helicase_DEAD-box_CS"/>
</dbReference>
<dbReference type="InterPro" id="IPR014014">
    <property type="entry name" value="RNA_helicase_DEAD_Q_motif"/>
</dbReference>
<dbReference type="InterPro" id="IPR001878">
    <property type="entry name" value="Znf_CCHC"/>
</dbReference>
<dbReference type="InterPro" id="IPR036875">
    <property type="entry name" value="Znf_CCHC_sf"/>
</dbReference>
<dbReference type="PANTHER" id="PTHR47958">
    <property type="entry name" value="ATP-DEPENDENT RNA HELICASE DBP3"/>
    <property type="match status" value="1"/>
</dbReference>
<dbReference type="Pfam" id="PF00270">
    <property type="entry name" value="DEAD"/>
    <property type="match status" value="1"/>
</dbReference>
<dbReference type="Pfam" id="PF00271">
    <property type="entry name" value="Helicase_C"/>
    <property type="match status" value="1"/>
</dbReference>
<dbReference type="Pfam" id="PF00098">
    <property type="entry name" value="zf-CCHC"/>
    <property type="match status" value="2"/>
</dbReference>
<dbReference type="SMART" id="SM00487">
    <property type="entry name" value="DEXDc"/>
    <property type="match status" value="1"/>
</dbReference>
<dbReference type="SMART" id="SM00490">
    <property type="entry name" value="HELICc"/>
    <property type="match status" value="1"/>
</dbReference>
<dbReference type="SMART" id="SM00343">
    <property type="entry name" value="ZnF_C2HC"/>
    <property type="match status" value="2"/>
</dbReference>
<dbReference type="SUPFAM" id="SSF52540">
    <property type="entry name" value="P-loop containing nucleoside triphosphate hydrolases"/>
    <property type="match status" value="2"/>
</dbReference>
<dbReference type="SUPFAM" id="SSF57756">
    <property type="entry name" value="Retrovirus zinc finger-like domains"/>
    <property type="match status" value="1"/>
</dbReference>
<dbReference type="PROSITE" id="PS00039">
    <property type="entry name" value="DEAD_ATP_HELICASE"/>
    <property type="match status" value="1"/>
</dbReference>
<dbReference type="PROSITE" id="PS51192">
    <property type="entry name" value="HELICASE_ATP_BIND_1"/>
    <property type="match status" value="1"/>
</dbReference>
<dbReference type="PROSITE" id="PS51194">
    <property type="entry name" value="HELICASE_CTER"/>
    <property type="match status" value="1"/>
</dbReference>
<dbReference type="PROSITE" id="PS51195">
    <property type="entry name" value="Q_MOTIF"/>
    <property type="match status" value="1"/>
</dbReference>
<dbReference type="PROSITE" id="PS50158">
    <property type="entry name" value="ZF_CCHC"/>
    <property type="match status" value="2"/>
</dbReference>
<sequence length="720" mass="79728">MDKSPTKTSIRTKFARHQPISDVDTTEQSSSCIKKDDRGLSSFGVQSSVFSRRSCRMSELEAKPTIISEDQRIAVRSEIGGSFSGFDDKVDNVFHSNNNLHGSPSTTELECPGIMNPRFLVGRSLNSRSRAVTRGSKRTSNVKENEGSIHRSDDQVSTENCSAKDEERDRDSGGVSSYGNKRSDEFCGTSPILEAKGFGISNTCFNCKKYGHRATECSAPQRECANCGDPNHRANECASWSKNGVQEPTKVTYVPVVDKMEEVFSMLKINAGDFFDKFFDASVQLVSRGQPVTIQPCKSFSDSDIPQSMRRNVERAGYTRTTPIQQYTLPLVADGKDILACAQTGSGKTAAFLLPIMSRLILEKDLNYGAEGGCYPRCIILTPTRELADQIYNEGRKFSYQSVMEIKPVYGGINVGYNKSQIMKGCTIIVGTIGRVKHFCEDGAIKLDKCRYLVLDEADRMIDSMGFGPEIEQIINYKNMPKNDKRQTMMFSATFPSSVQEAARKLLREDYTMITIDKIGAANKCVIQEFELCDRTSKVDKLLKLLGIDIDTYTTEKNSDVFVKKTIVFVAQQKMADTLASIMSAAQVPAITIHGAREQKERSAALKLFRSGAKPVLIATAVVERGLDIKGVDHVINYDMPNNIDDYIHRIGRTGRVGNSGRATSFISLADDVQILPQLVRTLADAEQVVPSWMKEAAGGTSNPNKFEKSIDTEEPEEAW</sequence>
<feature type="chain" id="PRO_0000055091" description="ATP-dependent RNA helicase glh-3">
    <location>
        <begin position="1"/>
        <end position="720"/>
    </location>
</feature>
<feature type="domain" description="Helicase ATP-binding" evidence="2">
    <location>
        <begin position="329"/>
        <end position="513"/>
    </location>
</feature>
<feature type="domain" description="Helicase C-terminal" evidence="3">
    <location>
        <begin position="549"/>
        <end position="698"/>
    </location>
</feature>
<feature type="zinc finger region" description="CCHC-type 1" evidence="1">
    <location>
        <begin position="202"/>
        <end position="219"/>
    </location>
</feature>
<feature type="zinc finger region" description="CCHC-type 2" evidence="1">
    <location>
        <begin position="222"/>
        <end position="239"/>
    </location>
</feature>
<feature type="region of interest" description="Disordered" evidence="4">
    <location>
        <begin position="1"/>
        <end position="34"/>
    </location>
</feature>
<feature type="region of interest" description="Disordered" evidence="4">
    <location>
        <begin position="125"/>
        <end position="180"/>
    </location>
</feature>
<feature type="region of interest" description="Disordered" evidence="4">
    <location>
        <begin position="696"/>
        <end position="720"/>
    </location>
</feature>
<feature type="short sequence motif" description="Q motif">
    <location>
        <begin position="298"/>
        <end position="326"/>
    </location>
</feature>
<feature type="short sequence motif" description="DEAD box">
    <location>
        <begin position="456"/>
        <end position="459"/>
    </location>
</feature>
<feature type="compositionally biased region" description="Polar residues" evidence="4">
    <location>
        <begin position="1"/>
        <end position="11"/>
    </location>
</feature>
<feature type="compositionally biased region" description="Basic and acidic residues" evidence="4">
    <location>
        <begin position="141"/>
        <end position="154"/>
    </location>
</feature>
<feature type="compositionally biased region" description="Basic and acidic residues" evidence="4">
    <location>
        <begin position="162"/>
        <end position="172"/>
    </location>
</feature>
<feature type="binding site" evidence="2">
    <location>
        <begin position="342"/>
        <end position="349"/>
    </location>
    <ligand>
        <name>ATP</name>
        <dbReference type="ChEBI" id="CHEBI:30616"/>
    </ligand>
</feature>
<proteinExistence type="evidence at protein level"/>
<reference key="1">
    <citation type="journal article" date="2000" name="Development">
        <title>Combinatorial RNA interference indicates GLH-4 can compensate for GLH-1; these two P granule components are critical for fertility in C. elegans.</title>
        <authorList>
            <person name="Kuznicki K.A."/>
            <person name="Smith P.A."/>
            <person name="Leung-Chiu W.M."/>
            <person name="Estevez A.O."/>
            <person name="Scott H.C."/>
            <person name="Bennett K.L."/>
        </authorList>
    </citation>
    <scope>NUCLEOTIDE SEQUENCE [MRNA]</scope>
    <source>
        <strain>Bristol N2</strain>
    </source>
</reference>
<reference key="2">
    <citation type="journal article" date="1998" name="Science">
        <title>Genome sequence of the nematode C. elegans: a platform for investigating biology.</title>
        <authorList>
            <consortium name="The C. elegans sequencing consortium"/>
        </authorList>
    </citation>
    <scope>NUCLEOTIDE SEQUENCE [LARGE SCALE GENOMIC DNA]</scope>
    <source>
        <strain>Bristol N2</strain>
    </source>
</reference>
<reference key="3">
    <citation type="journal article" date="2002" name="Dev. Biol.">
        <title>The GLH proteins, Caenorhabditis elegans P granule components, associate with CSN-5 and KGB-1, proteins necessary for fertility, and with ZYX-1, a predicted cytoskeletal protein.</title>
        <authorList>
            <person name="Smith P."/>
            <person name="Leung-Chiu W.-M."/>
            <person name="Montgomery R."/>
            <person name="Orsborn A."/>
            <person name="Kuznicki K."/>
            <person name="Gressman-Coberly E."/>
            <person name="Mutapcic L."/>
            <person name="Bennett K."/>
        </authorList>
    </citation>
    <scope>INTERACTION WITH CSN-5; KGB-1 AND ZYX-1</scope>
</reference>
<reference key="4">
    <citation type="journal article" date="2011" name="J. Cell Biol.">
        <title>PGL proteins self associate and bind RNPs to mediate germ granule assembly in C. elegans.</title>
        <authorList>
            <person name="Hanazawa M."/>
            <person name="Yonetani M."/>
            <person name="Sugimoto A."/>
        </authorList>
    </citation>
    <scope>SUBCELLULAR LOCATION</scope>
</reference>
<comment type="function">
    <text>Probable ATP-binding RNA helicase.</text>
</comment>
<comment type="catalytic activity">
    <reaction>
        <text>ATP + H2O = ADP + phosphate + H(+)</text>
        <dbReference type="Rhea" id="RHEA:13065"/>
        <dbReference type="ChEBI" id="CHEBI:15377"/>
        <dbReference type="ChEBI" id="CHEBI:15378"/>
        <dbReference type="ChEBI" id="CHEBI:30616"/>
        <dbReference type="ChEBI" id="CHEBI:43474"/>
        <dbReference type="ChEBI" id="CHEBI:456216"/>
        <dbReference type="EC" id="3.6.4.13"/>
    </reaction>
</comment>
<comment type="subunit">
    <text evidence="5">Interacts with csn-5. Interacts (via C-terminus) with kgb-1. Interacts with zyx-1.</text>
</comment>
<comment type="interaction">
    <interactant intactId="EBI-1571750">
        <id>O01836</id>
    </interactant>
    <interactant intactId="EBI-313007">
        <id>P91001</id>
        <label>csn-5</label>
    </interactant>
    <organismsDiffer>false</organismsDiffer>
    <experiments>2</experiments>
</comment>
<comment type="interaction">
    <interactant intactId="EBI-1571750">
        <id>O01836</id>
    </interactant>
    <interactant intactId="EBI-1571791">
        <id>P34689</id>
        <label>glh-1</label>
    </interactant>
    <organismsDiffer>false</organismsDiffer>
    <experiments>2</experiments>
</comment>
<comment type="interaction">
    <interactant intactId="EBI-1571750">
        <id>O01836</id>
    </interactant>
    <interactant intactId="EBI-319489">
        <id>O44408</id>
        <label>kgb-1</label>
    </interactant>
    <organismsDiffer>false</organismsDiffer>
    <experiments>2</experiments>
</comment>
<comment type="interaction">
    <interactant intactId="EBI-1571750">
        <id>O01836</id>
    </interactant>
    <interactant intactId="EBI-322208">
        <id>Q9U3F4</id>
        <label>zyx-1</label>
    </interactant>
    <organismsDiffer>false</organismsDiffer>
    <experiments>2</experiments>
</comment>
<comment type="subcellular location">
    <subcellularLocation>
        <location evidence="6">Cytoplasm</location>
    </subcellularLocation>
</comment>
<comment type="developmental stage">
    <text>During germline proliferation.</text>
</comment>
<comment type="similarity">
    <text evidence="7">Belongs to the DEAD box helicase family. DDX4/VASA subfamily.</text>
</comment>
<evidence type="ECO:0000255" key="1">
    <source>
        <dbReference type="PROSITE-ProRule" id="PRU00047"/>
    </source>
</evidence>
<evidence type="ECO:0000255" key="2">
    <source>
        <dbReference type="PROSITE-ProRule" id="PRU00541"/>
    </source>
</evidence>
<evidence type="ECO:0000255" key="3">
    <source>
        <dbReference type="PROSITE-ProRule" id="PRU00542"/>
    </source>
</evidence>
<evidence type="ECO:0000256" key="4">
    <source>
        <dbReference type="SAM" id="MobiDB-lite"/>
    </source>
</evidence>
<evidence type="ECO:0000269" key="5">
    <source>
    </source>
</evidence>
<evidence type="ECO:0000269" key="6">
    <source>
    </source>
</evidence>
<evidence type="ECO:0000305" key="7"/>
<evidence type="ECO:0000312" key="8">
    <source>
        <dbReference type="WormBase" id="B0414.6"/>
    </source>
</evidence>
<gene>
    <name evidence="8" type="primary">glh-3</name>
    <name evidence="8" type="ORF">B0414.6</name>
</gene>